<name>LIPA_GEOTN</name>
<sequence>MATKEEHVRKPDWLKIKLNTNEHYTGLKKLMRENRLHTVCEEAKCPNIHECWAVRRTATFMILGSVCTRACRFCAVKTGLPTELDWQEPERVAESVRIMNLKHVVVTAVARDDLKDGGAAVFAETVRAIRRKNPFTTIEVLPSDMGGVYENLKTLMDARPDILNHNIETVRRLTPRVRARATYERSLEFLRRAKELQPDIPTKSSIMIGLGETKEEIIEAMDDLRANHVDILTIGQYLQPTKKHLKVVKYYHPDEFQELKEIALSKGFSHCEAGPLVRSSYHADEQVNEAAKARQLKA</sequence>
<evidence type="ECO:0000255" key="1">
    <source>
        <dbReference type="HAMAP-Rule" id="MF_00206"/>
    </source>
</evidence>
<evidence type="ECO:0000255" key="2">
    <source>
        <dbReference type="PROSITE-ProRule" id="PRU01266"/>
    </source>
</evidence>
<organism>
    <name type="scientific">Geobacillus thermodenitrificans (strain NG80-2)</name>
    <dbReference type="NCBI Taxonomy" id="420246"/>
    <lineage>
        <taxon>Bacteria</taxon>
        <taxon>Bacillati</taxon>
        <taxon>Bacillota</taxon>
        <taxon>Bacilli</taxon>
        <taxon>Bacillales</taxon>
        <taxon>Anoxybacillaceae</taxon>
        <taxon>Geobacillus</taxon>
    </lineage>
</organism>
<feature type="chain" id="PRO_1000012226" description="Lipoyl synthase">
    <location>
        <begin position="1"/>
        <end position="298"/>
    </location>
</feature>
<feature type="domain" description="Radical SAM core" evidence="2">
    <location>
        <begin position="53"/>
        <end position="269"/>
    </location>
</feature>
<feature type="binding site" evidence="1">
    <location>
        <position position="40"/>
    </location>
    <ligand>
        <name>[4Fe-4S] cluster</name>
        <dbReference type="ChEBI" id="CHEBI:49883"/>
        <label>1</label>
    </ligand>
</feature>
<feature type="binding site" evidence="1">
    <location>
        <position position="45"/>
    </location>
    <ligand>
        <name>[4Fe-4S] cluster</name>
        <dbReference type="ChEBI" id="CHEBI:49883"/>
        <label>1</label>
    </ligand>
</feature>
<feature type="binding site" evidence="1">
    <location>
        <position position="51"/>
    </location>
    <ligand>
        <name>[4Fe-4S] cluster</name>
        <dbReference type="ChEBI" id="CHEBI:49883"/>
        <label>1</label>
    </ligand>
</feature>
<feature type="binding site" evidence="1">
    <location>
        <position position="67"/>
    </location>
    <ligand>
        <name>[4Fe-4S] cluster</name>
        <dbReference type="ChEBI" id="CHEBI:49883"/>
        <label>2</label>
        <note>4Fe-4S-S-AdoMet</note>
    </ligand>
</feature>
<feature type="binding site" evidence="1">
    <location>
        <position position="71"/>
    </location>
    <ligand>
        <name>[4Fe-4S] cluster</name>
        <dbReference type="ChEBI" id="CHEBI:49883"/>
        <label>2</label>
        <note>4Fe-4S-S-AdoMet</note>
    </ligand>
</feature>
<feature type="binding site" evidence="1">
    <location>
        <position position="74"/>
    </location>
    <ligand>
        <name>[4Fe-4S] cluster</name>
        <dbReference type="ChEBI" id="CHEBI:49883"/>
        <label>2</label>
        <note>4Fe-4S-S-AdoMet</note>
    </ligand>
</feature>
<feature type="binding site" evidence="1">
    <location>
        <position position="280"/>
    </location>
    <ligand>
        <name>[4Fe-4S] cluster</name>
        <dbReference type="ChEBI" id="CHEBI:49883"/>
        <label>1</label>
    </ligand>
</feature>
<accession>A4ISG5</accession>
<protein>
    <recommendedName>
        <fullName evidence="1">Lipoyl synthase</fullName>
        <ecNumber evidence="1">2.8.1.8</ecNumber>
    </recommendedName>
    <alternativeName>
        <fullName evidence="1">Lip-syn</fullName>
        <shortName evidence="1">LS</shortName>
    </alternativeName>
    <alternativeName>
        <fullName evidence="1">Lipoate synthase</fullName>
    </alternativeName>
    <alternativeName>
        <fullName evidence="1">Lipoic acid synthase</fullName>
    </alternativeName>
    <alternativeName>
        <fullName evidence="1">Sulfur insertion protein LipA</fullName>
    </alternativeName>
</protein>
<proteinExistence type="inferred from homology"/>
<reference key="1">
    <citation type="journal article" date="2007" name="Proc. Natl. Acad. Sci. U.S.A.">
        <title>Genome and proteome of long-chain alkane degrading Geobacillus thermodenitrificans NG80-2 isolated from a deep-subsurface oil reservoir.</title>
        <authorList>
            <person name="Feng L."/>
            <person name="Wang W."/>
            <person name="Cheng J."/>
            <person name="Ren Y."/>
            <person name="Zhao G."/>
            <person name="Gao C."/>
            <person name="Tang Y."/>
            <person name="Liu X."/>
            <person name="Han W."/>
            <person name="Peng X."/>
            <person name="Liu R."/>
            <person name="Wang L."/>
        </authorList>
    </citation>
    <scope>NUCLEOTIDE SEQUENCE [LARGE SCALE GENOMIC DNA]</scope>
    <source>
        <strain>NG80-2</strain>
    </source>
</reference>
<gene>
    <name evidence="1" type="primary">lipA</name>
    <name type="ordered locus">GTNG_2924</name>
</gene>
<comment type="function">
    <text evidence="1">Catalyzes the radical-mediated insertion of two sulfur atoms into the C-6 and C-8 positions of the octanoyl moiety bound to the lipoyl domains of lipoate-dependent enzymes, thereby converting the octanoylated domains into lipoylated derivatives.</text>
</comment>
<comment type="catalytic activity">
    <reaction evidence="1">
        <text>[[Fe-S] cluster scaffold protein carrying a second [4Fe-4S](2+) cluster] + N(6)-octanoyl-L-lysyl-[protein] + 2 oxidized [2Fe-2S]-[ferredoxin] + 2 S-adenosyl-L-methionine + 4 H(+) = [[Fe-S] cluster scaffold protein] + N(6)-[(R)-dihydrolipoyl]-L-lysyl-[protein] + 4 Fe(3+) + 2 hydrogen sulfide + 2 5'-deoxyadenosine + 2 L-methionine + 2 reduced [2Fe-2S]-[ferredoxin]</text>
        <dbReference type="Rhea" id="RHEA:16585"/>
        <dbReference type="Rhea" id="RHEA-COMP:9928"/>
        <dbReference type="Rhea" id="RHEA-COMP:10000"/>
        <dbReference type="Rhea" id="RHEA-COMP:10001"/>
        <dbReference type="Rhea" id="RHEA-COMP:10475"/>
        <dbReference type="Rhea" id="RHEA-COMP:14568"/>
        <dbReference type="Rhea" id="RHEA-COMP:14569"/>
        <dbReference type="ChEBI" id="CHEBI:15378"/>
        <dbReference type="ChEBI" id="CHEBI:17319"/>
        <dbReference type="ChEBI" id="CHEBI:29034"/>
        <dbReference type="ChEBI" id="CHEBI:29919"/>
        <dbReference type="ChEBI" id="CHEBI:33722"/>
        <dbReference type="ChEBI" id="CHEBI:33737"/>
        <dbReference type="ChEBI" id="CHEBI:33738"/>
        <dbReference type="ChEBI" id="CHEBI:57844"/>
        <dbReference type="ChEBI" id="CHEBI:59789"/>
        <dbReference type="ChEBI" id="CHEBI:78809"/>
        <dbReference type="ChEBI" id="CHEBI:83100"/>
        <dbReference type="EC" id="2.8.1.8"/>
    </reaction>
</comment>
<comment type="cofactor">
    <cofactor evidence="1">
        <name>[4Fe-4S] cluster</name>
        <dbReference type="ChEBI" id="CHEBI:49883"/>
    </cofactor>
    <text evidence="1">Binds 2 [4Fe-4S] clusters per subunit. One cluster is coordinated with 3 cysteines and an exchangeable S-adenosyl-L-methionine.</text>
</comment>
<comment type="pathway">
    <text evidence="1">Protein modification; protein lipoylation via endogenous pathway; protein N(6)-(lipoyl)lysine from octanoyl-[acyl-carrier-protein].</text>
</comment>
<comment type="subcellular location">
    <subcellularLocation>
        <location evidence="1">Cytoplasm</location>
    </subcellularLocation>
</comment>
<comment type="similarity">
    <text evidence="1">Belongs to the radical SAM superfamily. Lipoyl synthase family.</text>
</comment>
<keyword id="KW-0004">4Fe-4S</keyword>
<keyword id="KW-0963">Cytoplasm</keyword>
<keyword id="KW-0408">Iron</keyword>
<keyword id="KW-0411">Iron-sulfur</keyword>
<keyword id="KW-0479">Metal-binding</keyword>
<keyword id="KW-0949">S-adenosyl-L-methionine</keyword>
<keyword id="KW-0808">Transferase</keyword>
<dbReference type="EC" id="2.8.1.8" evidence="1"/>
<dbReference type="EMBL" id="CP000557">
    <property type="protein sequence ID" value="ABO68269.1"/>
    <property type="molecule type" value="Genomic_DNA"/>
</dbReference>
<dbReference type="RefSeq" id="WP_008880210.1">
    <property type="nucleotide sequence ID" value="NC_009328.1"/>
</dbReference>
<dbReference type="SMR" id="A4ISG5"/>
<dbReference type="KEGG" id="gtn:GTNG_2924"/>
<dbReference type="eggNOG" id="COG0320">
    <property type="taxonomic scope" value="Bacteria"/>
</dbReference>
<dbReference type="HOGENOM" id="CLU_033144_2_1_9"/>
<dbReference type="Proteomes" id="UP000001578">
    <property type="component" value="Chromosome"/>
</dbReference>
<dbReference type="GO" id="GO:0005737">
    <property type="term" value="C:cytoplasm"/>
    <property type="evidence" value="ECO:0007669"/>
    <property type="project" value="UniProtKB-SubCell"/>
</dbReference>
<dbReference type="GO" id="GO:0051539">
    <property type="term" value="F:4 iron, 4 sulfur cluster binding"/>
    <property type="evidence" value="ECO:0007669"/>
    <property type="project" value="UniProtKB-UniRule"/>
</dbReference>
<dbReference type="GO" id="GO:0016992">
    <property type="term" value="F:lipoate synthase activity"/>
    <property type="evidence" value="ECO:0007669"/>
    <property type="project" value="UniProtKB-UniRule"/>
</dbReference>
<dbReference type="GO" id="GO:0046872">
    <property type="term" value="F:metal ion binding"/>
    <property type="evidence" value="ECO:0007669"/>
    <property type="project" value="UniProtKB-KW"/>
</dbReference>
<dbReference type="CDD" id="cd01335">
    <property type="entry name" value="Radical_SAM"/>
    <property type="match status" value="1"/>
</dbReference>
<dbReference type="FunFam" id="3.20.20.70:FF:000040">
    <property type="entry name" value="Lipoyl synthase"/>
    <property type="match status" value="1"/>
</dbReference>
<dbReference type="Gene3D" id="3.20.20.70">
    <property type="entry name" value="Aldolase class I"/>
    <property type="match status" value="1"/>
</dbReference>
<dbReference type="HAMAP" id="MF_00206">
    <property type="entry name" value="Lipoyl_synth"/>
    <property type="match status" value="1"/>
</dbReference>
<dbReference type="InterPro" id="IPR013785">
    <property type="entry name" value="Aldolase_TIM"/>
</dbReference>
<dbReference type="InterPro" id="IPR006638">
    <property type="entry name" value="Elp3/MiaA/NifB-like_rSAM"/>
</dbReference>
<dbReference type="InterPro" id="IPR031691">
    <property type="entry name" value="LIAS_N"/>
</dbReference>
<dbReference type="InterPro" id="IPR003698">
    <property type="entry name" value="Lipoyl_synth"/>
</dbReference>
<dbReference type="InterPro" id="IPR007197">
    <property type="entry name" value="rSAM"/>
</dbReference>
<dbReference type="NCBIfam" id="TIGR00510">
    <property type="entry name" value="lipA"/>
    <property type="match status" value="1"/>
</dbReference>
<dbReference type="NCBIfam" id="NF004019">
    <property type="entry name" value="PRK05481.1"/>
    <property type="match status" value="1"/>
</dbReference>
<dbReference type="NCBIfam" id="NF009544">
    <property type="entry name" value="PRK12928.1"/>
    <property type="match status" value="1"/>
</dbReference>
<dbReference type="PANTHER" id="PTHR10949">
    <property type="entry name" value="LIPOYL SYNTHASE"/>
    <property type="match status" value="1"/>
</dbReference>
<dbReference type="PANTHER" id="PTHR10949:SF0">
    <property type="entry name" value="LIPOYL SYNTHASE, MITOCHONDRIAL"/>
    <property type="match status" value="1"/>
</dbReference>
<dbReference type="Pfam" id="PF16881">
    <property type="entry name" value="LIAS_N"/>
    <property type="match status" value="1"/>
</dbReference>
<dbReference type="Pfam" id="PF04055">
    <property type="entry name" value="Radical_SAM"/>
    <property type="match status" value="1"/>
</dbReference>
<dbReference type="PIRSF" id="PIRSF005963">
    <property type="entry name" value="Lipoyl_synth"/>
    <property type="match status" value="1"/>
</dbReference>
<dbReference type="SFLD" id="SFLDF00271">
    <property type="entry name" value="lipoyl_synthase"/>
    <property type="match status" value="1"/>
</dbReference>
<dbReference type="SFLD" id="SFLDS00029">
    <property type="entry name" value="Radical_SAM"/>
    <property type="match status" value="1"/>
</dbReference>
<dbReference type="SMART" id="SM00729">
    <property type="entry name" value="Elp3"/>
    <property type="match status" value="1"/>
</dbReference>
<dbReference type="SUPFAM" id="SSF102114">
    <property type="entry name" value="Radical SAM enzymes"/>
    <property type="match status" value="1"/>
</dbReference>
<dbReference type="PROSITE" id="PS51918">
    <property type="entry name" value="RADICAL_SAM"/>
    <property type="match status" value="1"/>
</dbReference>